<reference key="1">
    <citation type="journal article" date="2004" name="Genome Res.">
        <title>Genome sequence of Haloarcula marismortui: a halophilic archaeon from the Dead Sea.</title>
        <authorList>
            <person name="Baliga N.S."/>
            <person name="Bonneau R."/>
            <person name="Facciotti M.T."/>
            <person name="Pan M."/>
            <person name="Glusman G."/>
            <person name="Deutsch E.W."/>
            <person name="Shannon P."/>
            <person name="Chiu Y."/>
            <person name="Weng R.S."/>
            <person name="Gan R.R."/>
            <person name="Hung P."/>
            <person name="Date S.V."/>
            <person name="Marcotte E."/>
            <person name="Hood L."/>
            <person name="Ng W.V."/>
        </authorList>
    </citation>
    <scope>NUCLEOTIDE SEQUENCE [LARGE SCALE GENOMIC DNA]</scope>
    <source>
        <strain>ATCC 43049 / DSM 3752 / JCM 8966 / VKM B-1809</strain>
    </source>
</reference>
<protein>
    <recommendedName>
        <fullName evidence="1">Protein-glutamate methylesterase/protein-glutamine glutaminase</fullName>
        <ecNumber evidence="1">3.1.1.61</ecNumber>
        <ecNumber evidence="1">3.5.1.44</ecNumber>
    </recommendedName>
</protein>
<evidence type="ECO:0000255" key="1">
    <source>
        <dbReference type="HAMAP-Rule" id="MF_00099"/>
    </source>
</evidence>
<evidence type="ECO:0000256" key="2">
    <source>
        <dbReference type="SAM" id="MobiDB-lite"/>
    </source>
</evidence>
<evidence type="ECO:0007829" key="3">
    <source>
        <dbReference type="PDB" id="7ESG"/>
    </source>
</evidence>
<organism>
    <name type="scientific">Haloarcula marismortui (strain ATCC 43049 / DSM 3752 / JCM 8966 / VKM B-1809)</name>
    <name type="common">Halobacterium marismortui</name>
    <dbReference type="NCBI Taxonomy" id="272569"/>
    <lineage>
        <taxon>Archaea</taxon>
        <taxon>Methanobacteriati</taxon>
        <taxon>Methanobacteriota</taxon>
        <taxon>Stenosarchaea group</taxon>
        <taxon>Halobacteria</taxon>
        <taxon>Halobacteriales</taxon>
        <taxon>Haloarculaceae</taxon>
        <taxon>Haloarcula</taxon>
    </lineage>
</organism>
<comment type="function">
    <text evidence="1">Involved in chemotaxis. Part of a chemotaxis signal transduction system that modulates chemotaxis in response to various stimuli. Catalyzes the demethylation of specific methylglutamate residues introduced into the chemoreceptors (methyl-accepting chemotaxis proteins or MCP) by CheR. Also mediates the irreversible deamidation of specific glutamine residues to glutamic acid.</text>
</comment>
<comment type="catalytic activity">
    <reaction evidence="1">
        <text>[protein]-L-glutamate 5-O-methyl ester + H2O = L-glutamyl-[protein] + methanol + H(+)</text>
        <dbReference type="Rhea" id="RHEA:23236"/>
        <dbReference type="Rhea" id="RHEA-COMP:10208"/>
        <dbReference type="Rhea" id="RHEA-COMP:10311"/>
        <dbReference type="ChEBI" id="CHEBI:15377"/>
        <dbReference type="ChEBI" id="CHEBI:15378"/>
        <dbReference type="ChEBI" id="CHEBI:17790"/>
        <dbReference type="ChEBI" id="CHEBI:29973"/>
        <dbReference type="ChEBI" id="CHEBI:82795"/>
        <dbReference type="EC" id="3.1.1.61"/>
    </reaction>
</comment>
<comment type="catalytic activity">
    <reaction evidence="1">
        <text>L-glutaminyl-[protein] + H2O = L-glutamyl-[protein] + NH4(+)</text>
        <dbReference type="Rhea" id="RHEA:16441"/>
        <dbReference type="Rhea" id="RHEA-COMP:10207"/>
        <dbReference type="Rhea" id="RHEA-COMP:10208"/>
        <dbReference type="ChEBI" id="CHEBI:15377"/>
        <dbReference type="ChEBI" id="CHEBI:28938"/>
        <dbReference type="ChEBI" id="CHEBI:29973"/>
        <dbReference type="ChEBI" id="CHEBI:30011"/>
        <dbReference type="EC" id="3.5.1.44"/>
    </reaction>
</comment>
<comment type="subcellular location">
    <subcellularLocation>
        <location evidence="1">Cytoplasm</location>
    </subcellularLocation>
</comment>
<comment type="domain">
    <text evidence="1">Contains a C-terminal catalytic domain, and an N-terminal region which modulates catalytic activity.</text>
</comment>
<comment type="PTM">
    <text evidence="1">Phosphorylated by CheA. Phosphorylation of the N-terminal regulatory domain activates the methylesterase activity.</text>
</comment>
<comment type="similarity">
    <text evidence="1">Belongs to the CheB family.</text>
</comment>
<accession>Q5V0B3</accession>
<keyword id="KW-0002">3D-structure</keyword>
<keyword id="KW-0145">Chemotaxis</keyword>
<keyword id="KW-0963">Cytoplasm</keyword>
<keyword id="KW-0378">Hydrolase</keyword>
<keyword id="KW-0597">Phosphoprotein</keyword>
<keyword id="KW-1185">Reference proteome</keyword>
<sequence>MADGVRAVVADDSHFMRSVISDILSDGGIDVVAQARDGEEAVSAVIEHRPDVVTMDVEMPVMNGIEATERIMAESPTPVLMLSAHTDENADVTFEALDKGAVDFFTKPGGEVSMEMSRLKDQLVEMVSSVAAVDVGATGSRSGTGSDSGTAPTTAGGSATDRRGTGGSSGQTTYVANPTLVIGSSTGGPKMVEQVMENLPIEADLRVLIIQHMPEGFTGRFAERINTRSDYEVQEATDGARIGGGEGLVAAGDRHMEVKNYRNGRLRTKLTQDEPVNSVRPAVDVTMQTAAETIDDPLVGLILTGMGEDGADGIRRIKQAGGKTIAQDEATSAVYGMPKRAAETGCVDTVLPIDDIADGVIDTITTEVT</sequence>
<feature type="chain" id="PRO_0000158049" description="Protein-glutamate methylesterase/protein-glutamine glutaminase">
    <location>
        <begin position="1"/>
        <end position="369"/>
    </location>
</feature>
<feature type="domain" description="Response regulatory" evidence="1">
    <location>
        <begin position="6"/>
        <end position="122"/>
    </location>
</feature>
<feature type="domain" description="CheB-type methylesterase" evidence="1">
    <location>
        <begin position="173"/>
        <end position="367"/>
    </location>
</feature>
<feature type="region of interest" description="Disordered" evidence="2">
    <location>
        <begin position="136"/>
        <end position="178"/>
    </location>
</feature>
<feature type="compositionally biased region" description="Low complexity" evidence="2">
    <location>
        <begin position="138"/>
        <end position="159"/>
    </location>
</feature>
<feature type="active site" evidence="1">
    <location>
        <position position="185"/>
    </location>
</feature>
<feature type="active site" evidence="1">
    <location>
        <position position="212"/>
    </location>
</feature>
<feature type="active site" evidence="1">
    <location>
        <position position="309"/>
    </location>
</feature>
<feature type="modified residue" description="4-aspartylphosphate" evidence="1">
    <location>
        <position position="56"/>
    </location>
</feature>
<feature type="strand" evidence="3">
    <location>
        <begin position="12"/>
        <end position="15"/>
    </location>
</feature>
<feature type="strand" evidence="3">
    <location>
        <begin position="27"/>
        <end position="29"/>
    </location>
</feature>
<feature type="strand" evidence="3">
    <location>
        <begin position="36"/>
        <end position="39"/>
    </location>
</feature>
<feature type="helix" evidence="3">
    <location>
        <begin position="42"/>
        <end position="45"/>
    </location>
</feature>
<feature type="strand" evidence="3">
    <location>
        <begin position="53"/>
        <end position="55"/>
    </location>
</feature>
<feature type="strand" evidence="3">
    <location>
        <begin position="60"/>
        <end position="62"/>
    </location>
</feature>
<feature type="turn" evidence="3">
    <location>
        <begin position="64"/>
        <end position="68"/>
    </location>
</feature>
<feature type="helix" evidence="3">
    <location>
        <begin position="69"/>
        <end position="72"/>
    </location>
</feature>
<feature type="strand" evidence="3">
    <location>
        <begin position="79"/>
        <end position="82"/>
    </location>
</feature>
<feature type="helix" evidence="3">
    <location>
        <begin position="89"/>
        <end position="99"/>
    </location>
</feature>
<feature type="strand" evidence="3">
    <location>
        <begin position="101"/>
        <end position="103"/>
    </location>
</feature>
<feature type="helix" evidence="3">
    <location>
        <begin position="116"/>
        <end position="121"/>
    </location>
</feature>
<feature type="helix" evidence="3">
    <location>
        <begin position="124"/>
        <end position="130"/>
    </location>
</feature>
<feature type="turn" evidence="3">
    <location>
        <begin position="136"/>
        <end position="141"/>
    </location>
</feature>
<feature type="strand" evidence="3">
    <location>
        <begin position="143"/>
        <end position="145"/>
    </location>
</feature>
<feature type="helix" evidence="3">
    <location>
        <begin position="155"/>
        <end position="159"/>
    </location>
</feature>
<feature type="turn" evidence="3">
    <location>
        <begin position="160"/>
        <end position="163"/>
    </location>
</feature>
<feature type="strand" evidence="3">
    <location>
        <begin position="167"/>
        <end position="170"/>
    </location>
</feature>
<feature type="helix" evidence="3">
    <location>
        <begin position="188"/>
        <end position="192"/>
    </location>
</feature>
<feature type="helix" evidence="3">
    <location>
        <begin position="193"/>
        <end position="196"/>
    </location>
</feature>
<feature type="strand" evidence="3">
    <location>
        <begin position="219"/>
        <end position="222"/>
    </location>
</feature>
<feature type="helix" evidence="3">
    <location>
        <begin position="223"/>
        <end position="227"/>
    </location>
</feature>
<feature type="strand" evidence="3">
    <location>
        <begin position="229"/>
        <end position="231"/>
    </location>
</feature>
<feature type="strand" evidence="3">
    <location>
        <begin position="262"/>
        <end position="264"/>
    </location>
</feature>
<feature type="helix" evidence="3">
    <location>
        <begin position="276"/>
        <end position="278"/>
    </location>
</feature>
<feature type="helix" evidence="3">
    <location>
        <begin position="283"/>
        <end position="289"/>
    </location>
</feature>
<feature type="turn" evidence="3">
    <location>
        <begin position="290"/>
        <end position="294"/>
    </location>
</feature>
<feature type="helix" evidence="3">
    <location>
        <begin position="309"/>
        <end position="311"/>
    </location>
</feature>
<feature type="helix" evidence="3">
    <location>
        <begin position="315"/>
        <end position="318"/>
    </location>
</feature>
<feature type="strand" evidence="3">
    <location>
        <begin position="331"/>
        <end position="333"/>
    </location>
</feature>
<feature type="strand" evidence="3">
    <location>
        <begin position="336"/>
        <end position="338"/>
    </location>
</feature>
<feature type="strand" evidence="3">
    <location>
        <begin position="341"/>
        <end position="344"/>
    </location>
</feature>
<feature type="helix" evidence="3">
    <location>
        <begin position="357"/>
        <end position="360"/>
    </location>
</feature>
<feature type="helix" evidence="3">
    <location>
        <begin position="362"/>
        <end position="364"/>
    </location>
</feature>
<feature type="strand" evidence="3">
    <location>
        <begin position="365"/>
        <end position="367"/>
    </location>
</feature>
<proteinExistence type="evidence at protein level"/>
<name>CHEB_HALMA</name>
<gene>
    <name evidence="1" type="primary">cheB</name>
    <name type="ordered locus">rrnAC2204</name>
</gene>
<dbReference type="EC" id="3.1.1.61" evidence="1"/>
<dbReference type="EC" id="3.5.1.44" evidence="1"/>
<dbReference type="EMBL" id="AY596297">
    <property type="protein sequence ID" value="AAV47040.1"/>
    <property type="molecule type" value="Genomic_DNA"/>
</dbReference>
<dbReference type="RefSeq" id="WP_007189315.1">
    <property type="nucleotide sequence ID" value="NZ_CP039138.1"/>
</dbReference>
<dbReference type="PDB" id="7ESG">
    <property type="method" value="X-ray"/>
    <property type="resolution" value="2.53 A"/>
    <property type="chains" value="A=1-369"/>
</dbReference>
<dbReference type="PDBsum" id="7ESG"/>
<dbReference type="SMR" id="Q5V0B3"/>
<dbReference type="STRING" id="272569.rrnAC2204"/>
<dbReference type="PaxDb" id="272569-rrnAC2204"/>
<dbReference type="EnsemblBacteria" id="AAV47040">
    <property type="protein sequence ID" value="AAV47040"/>
    <property type="gene ID" value="rrnAC2204"/>
</dbReference>
<dbReference type="KEGG" id="hma:rrnAC2204"/>
<dbReference type="PATRIC" id="fig|272569.17.peg.2838"/>
<dbReference type="eggNOG" id="arCOG02382">
    <property type="taxonomic scope" value="Archaea"/>
</dbReference>
<dbReference type="HOGENOM" id="CLU_000445_51_0_2"/>
<dbReference type="Proteomes" id="UP000001169">
    <property type="component" value="Chromosome I"/>
</dbReference>
<dbReference type="GO" id="GO:0005737">
    <property type="term" value="C:cytoplasm"/>
    <property type="evidence" value="ECO:0007669"/>
    <property type="project" value="UniProtKB-SubCell"/>
</dbReference>
<dbReference type="GO" id="GO:0000156">
    <property type="term" value="F:phosphorelay response regulator activity"/>
    <property type="evidence" value="ECO:0007669"/>
    <property type="project" value="InterPro"/>
</dbReference>
<dbReference type="GO" id="GO:0008984">
    <property type="term" value="F:protein-glutamate methylesterase activity"/>
    <property type="evidence" value="ECO:0007669"/>
    <property type="project" value="UniProtKB-UniRule"/>
</dbReference>
<dbReference type="GO" id="GO:0050568">
    <property type="term" value="F:protein-glutamine glutaminase activity"/>
    <property type="evidence" value="ECO:0007669"/>
    <property type="project" value="UniProtKB-UniRule"/>
</dbReference>
<dbReference type="GO" id="GO:0006935">
    <property type="term" value="P:chemotaxis"/>
    <property type="evidence" value="ECO:0007669"/>
    <property type="project" value="UniProtKB-UniRule"/>
</dbReference>
<dbReference type="CDD" id="cd16432">
    <property type="entry name" value="CheB_Rec"/>
    <property type="match status" value="1"/>
</dbReference>
<dbReference type="CDD" id="cd17541">
    <property type="entry name" value="REC_CheB-like"/>
    <property type="match status" value="1"/>
</dbReference>
<dbReference type="Gene3D" id="3.40.50.2300">
    <property type="match status" value="1"/>
</dbReference>
<dbReference type="Gene3D" id="3.40.50.180">
    <property type="entry name" value="Methylesterase CheB, C-terminal domain"/>
    <property type="match status" value="1"/>
</dbReference>
<dbReference type="HAMAP" id="MF_00099">
    <property type="entry name" value="CheB_chemtxs"/>
    <property type="match status" value="1"/>
</dbReference>
<dbReference type="InterPro" id="IPR008248">
    <property type="entry name" value="CheB-like"/>
</dbReference>
<dbReference type="InterPro" id="IPR035909">
    <property type="entry name" value="CheB_C"/>
</dbReference>
<dbReference type="InterPro" id="IPR011006">
    <property type="entry name" value="CheY-like_superfamily"/>
</dbReference>
<dbReference type="InterPro" id="IPR000673">
    <property type="entry name" value="Sig_transdc_resp-reg_Me-estase"/>
</dbReference>
<dbReference type="InterPro" id="IPR001789">
    <property type="entry name" value="Sig_transdc_resp-reg_receiver"/>
</dbReference>
<dbReference type="NCBIfam" id="NF001965">
    <property type="entry name" value="PRK00742.1"/>
    <property type="match status" value="1"/>
</dbReference>
<dbReference type="PANTHER" id="PTHR42872">
    <property type="entry name" value="PROTEIN-GLUTAMATE METHYLESTERASE/PROTEIN-GLUTAMINE GLUTAMINASE"/>
    <property type="match status" value="1"/>
</dbReference>
<dbReference type="PANTHER" id="PTHR42872:SF6">
    <property type="entry name" value="PROTEIN-GLUTAMATE METHYLESTERASE_PROTEIN-GLUTAMINE GLUTAMINASE"/>
    <property type="match status" value="1"/>
</dbReference>
<dbReference type="Pfam" id="PF01339">
    <property type="entry name" value="CheB_methylest"/>
    <property type="match status" value="1"/>
</dbReference>
<dbReference type="Pfam" id="PF00072">
    <property type="entry name" value="Response_reg"/>
    <property type="match status" value="1"/>
</dbReference>
<dbReference type="PIRSF" id="PIRSF000876">
    <property type="entry name" value="RR_chemtxs_CheB"/>
    <property type="match status" value="1"/>
</dbReference>
<dbReference type="SMART" id="SM00448">
    <property type="entry name" value="REC"/>
    <property type="match status" value="1"/>
</dbReference>
<dbReference type="SUPFAM" id="SSF52172">
    <property type="entry name" value="CheY-like"/>
    <property type="match status" value="1"/>
</dbReference>
<dbReference type="SUPFAM" id="SSF52738">
    <property type="entry name" value="Methylesterase CheB, C-terminal domain"/>
    <property type="match status" value="1"/>
</dbReference>
<dbReference type="PROSITE" id="PS50122">
    <property type="entry name" value="CHEB"/>
    <property type="match status" value="1"/>
</dbReference>
<dbReference type="PROSITE" id="PS50110">
    <property type="entry name" value="RESPONSE_REGULATORY"/>
    <property type="match status" value="1"/>
</dbReference>